<proteinExistence type="inferred from homology"/>
<comment type="function">
    <text evidence="1">One of the primary rRNA binding proteins, it binds directly to 16S rRNA where it nucleates assembly of the head domain of the 30S subunit. Is located at the subunit interface close to the decoding center, probably blocks exit of the E-site tRNA.</text>
</comment>
<comment type="subunit">
    <text evidence="1">Part of the 30S ribosomal subunit. Contacts proteins S9 and S11.</text>
</comment>
<comment type="similarity">
    <text evidence="1">Belongs to the universal ribosomal protein uS7 family.</text>
</comment>
<sequence>MPRKGSVPKRDVLPDPIHNSKLVTKLINKIMLDGKRGTAQRILYSAFDLVEQRSGRDALEVFEEAINNIMPVLEVKARRVGGSNYQVPVEVRPERRTTLGLRWLVNYARLRGEKTMEDRLANEILDAANNTGGAVKKREDTHKMAEANKAFAHYRW</sequence>
<organism>
    <name type="scientific">Staphylococcus haemolyticus (strain JCSC1435)</name>
    <dbReference type="NCBI Taxonomy" id="279808"/>
    <lineage>
        <taxon>Bacteria</taxon>
        <taxon>Bacillati</taxon>
        <taxon>Bacillota</taxon>
        <taxon>Bacilli</taxon>
        <taxon>Bacillales</taxon>
        <taxon>Staphylococcaceae</taxon>
        <taxon>Staphylococcus</taxon>
    </lineage>
</organism>
<protein>
    <recommendedName>
        <fullName evidence="1">Small ribosomal subunit protein uS7</fullName>
    </recommendedName>
    <alternativeName>
        <fullName evidence="2">30S ribosomal protein S7</fullName>
    </alternativeName>
</protein>
<name>RS7_STAHJ</name>
<evidence type="ECO:0000255" key="1">
    <source>
        <dbReference type="HAMAP-Rule" id="MF_00480"/>
    </source>
</evidence>
<evidence type="ECO:0000305" key="2"/>
<accession>Q4L3K7</accession>
<feature type="chain" id="PRO_0000226530" description="Small ribosomal subunit protein uS7">
    <location>
        <begin position="1"/>
        <end position="156"/>
    </location>
</feature>
<keyword id="KW-0687">Ribonucleoprotein</keyword>
<keyword id="KW-0689">Ribosomal protein</keyword>
<keyword id="KW-0694">RNA-binding</keyword>
<keyword id="KW-0699">rRNA-binding</keyword>
<keyword id="KW-0820">tRNA-binding</keyword>
<dbReference type="EMBL" id="AP006716">
    <property type="protein sequence ID" value="BAE05770.1"/>
    <property type="molecule type" value="Genomic_DNA"/>
</dbReference>
<dbReference type="RefSeq" id="WP_001137495.1">
    <property type="nucleotide sequence ID" value="NC_007168.1"/>
</dbReference>
<dbReference type="SMR" id="Q4L3K7"/>
<dbReference type="GeneID" id="98344880"/>
<dbReference type="KEGG" id="sha:SH2461"/>
<dbReference type="eggNOG" id="COG0049">
    <property type="taxonomic scope" value="Bacteria"/>
</dbReference>
<dbReference type="HOGENOM" id="CLU_072226_1_1_9"/>
<dbReference type="OrthoDB" id="9807653at2"/>
<dbReference type="Proteomes" id="UP000000543">
    <property type="component" value="Chromosome"/>
</dbReference>
<dbReference type="GO" id="GO:0015935">
    <property type="term" value="C:small ribosomal subunit"/>
    <property type="evidence" value="ECO:0007669"/>
    <property type="project" value="InterPro"/>
</dbReference>
<dbReference type="GO" id="GO:0019843">
    <property type="term" value="F:rRNA binding"/>
    <property type="evidence" value="ECO:0007669"/>
    <property type="project" value="UniProtKB-UniRule"/>
</dbReference>
<dbReference type="GO" id="GO:0003735">
    <property type="term" value="F:structural constituent of ribosome"/>
    <property type="evidence" value="ECO:0007669"/>
    <property type="project" value="InterPro"/>
</dbReference>
<dbReference type="GO" id="GO:0000049">
    <property type="term" value="F:tRNA binding"/>
    <property type="evidence" value="ECO:0007669"/>
    <property type="project" value="UniProtKB-UniRule"/>
</dbReference>
<dbReference type="GO" id="GO:0006412">
    <property type="term" value="P:translation"/>
    <property type="evidence" value="ECO:0007669"/>
    <property type="project" value="UniProtKB-UniRule"/>
</dbReference>
<dbReference type="CDD" id="cd14869">
    <property type="entry name" value="uS7_Bacteria"/>
    <property type="match status" value="1"/>
</dbReference>
<dbReference type="FunFam" id="1.10.455.10:FF:000001">
    <property type="entry name" value="30S ribosomal protein S7"/>
    <property type="match status" value="1"/>
</dbReference>
<dbReference type="Gene3D" id="1.10.455.10">
    <property type="entry name" value="Ribosomal protein S7 domain"/>
    <property type="match status" value="1"/>
</dbReference>
<dbReference type="HAMAP" id="MF_00480_B">
    <property type="entry name" value="Ribosomal_uS7_B"/>
    <property type="match status" value="1"/>
</dbReference>
<dbReference type="InterPro" id="IPR000235">
    <property type="entry name" value="Ribosomal_uS7"/>
</dbReference>
<dbReference type="InterPro" id="IPR005717">
    <property type="entry name" value="Ribosomal_uS7_bac/org-type"/>
</dbReference>
<dbReference type="InterPro" id="IPR020606">
    <property type="entry name" value="Ribosomal_uS7_CS"/>
</dbReference>
<dbReference type="InterPro" id="IPR023798">
    <property type="entry name" value="Ribosomal_uS7_dom"/>
</dbReference>
<dbReference type="InterPro" id="IPR036823">
    <property type="entry name" value="Ribosomal_uS7_dom_sf"/>
</dbReference>
<dbReference type="NCBIfam" id="TIGR01029">
    <property type="entry name" value="rpsG_bact"/>
    <property type="match status" value="1"/>
</dbReference>
<dbReference type="PANTHER" id="PTHR11205">
    <property type="entry name" value="RIBOSOMAL PROTEIN S7"/>
    <property type="match status" value="1"/>
</dbReference>
<dbReference type="Pfam" id="PF00177">
    <property type="entry name" value="Ribosomal_S7"/>
    <property type="match status" value="1"/>
</dbReference>
<dbReference type="PIRSF" id="PIRSF002122">
    <property type="entry name" value="RPS7p_RPS7a_RPS5e_RPS7o"/>
    <property type="match status" value="1"/>
</dbReference>
<dbReference type="SUPFAM" id="SSF47973">
    <property type="entry name" value="Ribosomal protein S7"/>
    <property type="match status" value="1"/>
</dbReference>
<dbReference type="PROSITE" id="PS00052">
    <property type="entry name" value="RIBOSOMAL_S7"/>
    <property type="match status" value="1"/>
</dbReference>
<gene>
    <name evidence="1" type="primary">rpsG</name>
    <name type="ordered locus">SH2461</name>
</gene>
<reference key="1">
    <citation type="journal article" date="2005" name="J. Bacteriol.">
        <title>Whole-genome sequencing of Staphylococcus haemolyticus uncovers the extreme plasticity of its genome and the evolution of human-colonizing staphylococcal species.</title>
        <authorList>
            <person name="Takeuchi F."/>
            <person name="Watanabe S."/>
            <person name="Baba T."/>
            <person name="Yuzawa H."/>
            <person name="Ito T."/>
            <person name="Morimoto Y."/>
            <person name="Kuroda M."/>
            <person name="Cui L."/>
            <person name="Takahashi M."/>
            <person name="Ankai A."/>
            <person name="Baba S."/>
            <person name="Fukui S."/>
            <person name="Lee J.C."/>
            <person name="Hiramatsu K."/>
        </authorList>
    </citation>
    <scope>NUCLEOTIDE SEQUENCE [LARGE SCALE GENOMIC DNA]</scope>
    <source>
        <strain>JCSC1435</strain>
    </source>
</reference>